<protein>
    <recommendedName>
        <fullName evidence="1">Large ribosomal subunit protein uL22</fullName>
    </recommendedName>
    <alternativeName>
        <fullName evidence="3">50S ribosomal protein L22</fullName>
    </alternativeName>
</protein>
<comment type="function">
    <text evidence="1">This protein binds specifically to 23S rRNA; its binding is stimulated by other ribosomal proteins, e.g. L4, L17, and L20. It is important during the early stages of 50S assembly. It makes multiple contacts with different domains of the 23S rRNA in the assembled 50S subunit and ribosome (By similarity).</text>
</comment>
<comment type="function">
    <text evidence="1">The globular domain of the protein is located near the polypeptide exit tunnel on the outside of the subunit, while an extended beta-hairpin is found that lines the wall of the exit tunnel in the center of the 70S ribosome.</text>
</comment>
<comment type="subunit">
    <text evidence="1">Part of the 50S ribosomal subunit.</text>
</comment>
<comment type="similarity">
    <text evidence="1">Belongs to the universal ribosomal protein uL22 family.</text>
</comment>
<dbReference type="EMBL" id="AE017283">
    <property type="protein sequence ID" value="AAT83582.1"/>
    <property type="molecule type" value="Genomic_DNA"/>
</dbReference>
<dbReference type="RefSeq" id="WP_002515971.1">
    <property type="nucleotide sequence ID" value="NZ_CP025935.1"/>
</dbReference>
<dbReference type="PDB" id="8CRX">
    <property type="method" value="EM"/>
    <property type="resolution" value="2.78 A"/>
    <property type="chains" value="r=1-153"/>
</dbReference>
<dbReference type="PDB" id="8CVM">
    <property type="method" value="EM"/>
    <property type="resolution" value="2.66 A"/>
    <property type="chains" value="r=1-153"/>
</dbReference>
<dbReference type="PDBsum" id="8CRX"/>
<dbReference type="PDBsum" id="8CVM"/>
<dbReference type="SMR" id="Q6A6N1"/>
<dbReference type="EnsemblBacteria" id="AAT83582">
    <property type="protein sequence ID" value="AAT83582"/>
    <property type="gene ID" value="PPA1858"/>
</dbReference>
<dbReference type="GeneID" id="92857805"/>
<dbReference type="KEGG" id="pac:PPA1858"/>
<dbReference type="eggNOG" id="COG0091">
    <property type="taxonomic scope" value="Bacteria"/>
</dbReference>
<dbReference type="HOGENOM" id="CLU_083987_3_2_11"/>
<dbReference type="Proteomes" id="UP000000603">
    <property type="component" value="Chromosome"/>
</dbReference>
<dbReference type="GO" id="GO:0022625">
    <property type="term" value="C:cytosolic large ribosomal subunit"/>
    <property type="evidence" value="ECO:0007669"/>
    <property type="project" value="TreeGrafter"/>
</dbReference>
<dbReference type="GO" id="GO:0019843">
    <property type="term" value="F:rRNA binding"/>
    <property type="evidence" value="ECO:0007669"/>
    <property type="project" value="UniProtKB-UniRule"/>
</dbReference>
<dbReference type="GO" id="GO:0003735">
    <property type="term" value="F:structural constituent of ribosome"/>
    <property type="evidence" value="ECO:0007669"/>
    <property type="project" value="InterPro"/>
</dbReference>
<dbReference type="GO" id="GO:0006412">
    <property type="term" value="P:translation"/>
    <property type="evidence" value="ECO:0007669"/>
    <property type="project" value="UniProtKB-UniRule"/>
</dbReference>
<dbReference type="CDD" id="cd00336">
    <property type="entry name" value="Ribosomal_L22"/>
    <property type="match status" value="1"/>
</dbReference>
<dbReference type="Gene3D" id="3.90.470.10">
    <property type="entry name" value="Ribosomal protein L22/L17"/>
    <property type="match status" value="1"/>
</dbReference>
<dbReference type="HAMAP" id="MF_01331_B">
    <property type="entry name" value="Ribosomal_uL22_B"/>
    <property type="match status" value="1"/>
</dbReference>
<dbReference type="InterPro" id="IPR001063">
    <property type="entry name" value="Ribosomal_uL22"/>
</dbReference>
<dbReference type="InterPro" id="IPR005727">
    <property type="entry name" value="Ribosomal_uL22_bac/chlpt-type"/>
</dbReference>
<dbReference type="InterPro" id="IPR047867">
    <property type="entry name" value="Ribosomal_uL22_bac/org-type"/>
</dbReference>
<dbReference type="InterPro" id="IPR018260">
    <property type="entry name" value="Ribosomal_uL22_CS"/>
</dbReference>
<dbReference type="InterPro" id="IPR036394">
    <property type="entry name" value="Ribosomal_uL22_sf"/>
</dbReference>
<dbReference type="NCBIfam" id="TIGR01044">
    <property type="entry name" value="rplV_bact"/>
    <property type="match status" value="1"/>
</dbReference>
<dbReference type="PANTHER" id="PTHR13501">
    <property type="entry name" value="CHLOROPLAST 50S RIBOSOMAL PROTEIN L22-RELATED"/>
    <property type="match status" value="1"/>
</dbReference>
<dbReference type="PANTHER" id="PTHR13501:SF8">
    <property type="entry name" value="LARGE RIBOSOMAL SUBUNIT PROTEIN UL22M"/>
    <property type="match status" value="1"/>
</dbReference>
<dbReference type="Pfam" id="PF00237">
    <property type="entry name" value="Ribosomal_L22"/>
    <property type="match status" value="1"/>
</dbReference>
<dbReference type="SUPFAM" id="SSF54843">
    <property type="entry name" value="Ribosomal protein L22"/>
    <property type="match status" value="1"/>
</dbReference>
<dbReference type="PROSITE" id="PS00464">
    <property type="entry name" value="RIBOSOMAL_L22"/>
    <property type="match status" value="1"/>
</dbReference>
<keyword id="KW-0002">3D-structure</keyword>
<keyword id="KW-0687">Ribonucleoprotein</keyword>
<keyword id="KW-0689">Ribosomal protein</keyword>
<keyword id="KW-0694">RNA-binding</keyword>
<keyword id="KW-0699">rRNA-binding</keyword>
<name>RL22_CUTAK</name>
<accession>Q6A6N1</accession>
<gene>
    <name evidence="1" type="primary">rplV</name>
    <name type="ordered locus">PPA1858</name>
</gene>
<proteinExistence type="evidence at protein level"/>
<reference key="1">
    <citation type="journal article" date="2004" name="Science">
        <title>The complete genome sequence of Propionibacterium acnes, a commensal of human skin.</title>
        <authorList>
            <person name="Brueggemann H."/>
            <person name="Henne A."/>
            <person name="Hoster F."/>
            <person name="Liesegang H."/>
            <person name="Wiezer A."/>
            <person name="Strittmatter A."/>
            <person name="Hujer S."/>
            <person name="Duerre P."/>
            <person name="Gottschalk G."/>
        </authorList>
    </citation>
    <scope>NUCLEOTIDE SEQUENCE [LARGE SCALE GENOMIC DNA]</scope>
    <source>
        <strain>DSM 16379 / KPA171202</strain>
    </source>
</reference>
<organism>
    <name type="scientific">Cutibacterium acnes (strain DSM 16379 / KPA171202)</name>
    <name type="common">Propionibacterium acnes</name>
    <dbReference type="NCBI Taxonomy" id="267747"/>
    <lineage>
        <taxon>Bacteria</taxon>
        <taxon>Bacillati</taxon>
        <taxon>Actinomycetota</taxon>
        <taxon>Actinomycetes</taxon>
        <taxon>Propionibacteriales</taxon>
        <taxon>Propionibacteriaceae</taxon>
        <taxon>Cutibacterium</taxon>
    </lineage>
</organism>
<sequence>MSKTERPSRRAALLGDRPGSYAIARHVRMSASKCRRVINLVRGMDAVDAVTMLKFQPQAAAEPIRKVIASAMANAEQTEGLRADDLYISQAFVDEGITMRRIRPRAKGSASRILKRSAHITVVVEPKEARQARKKAKSGRPAAAAKSETEKGA</sequence>
<evidence type="ECO:0000255" key="1">
    <source>
        <dbReference type="HAMAP-Rule" id="MF_01331"/>
    </source>
</evidence>
<evidence type="ECO:0000256" key="2">
    <source>
        <dbReference type="SAM" id="MobiDB-lite"/>
    </source>
</evidence>
<evidence type="ECO:0000305" key="3"/>
<evidence type="ECO:0007829" key="4">
    <source>
        <dbReference type="PDB" id="8CVM"/>
    </source>
</evidence>
<feature type="chain" id="PRO_0000243183" description="Large ribosomal subunit protein uL22">
    <location>
        <begin position="1"/>
        <end position="153"/>
    </location>
</feature>
<feature type="region of interest" description="Disordered" evidence="2">
    <location>
        <begin position="125"/>
        <end position="153"/>
    </location>
</feature>
<feature type="helix" evidence="4">
    <location>
        <begin position="9"/>
        <end position="13"/>
    </location>
</feature>
<feature type="strand" evidence="4">
    <location>
        <begin position="15"/>
        <end position="18"/>
    </location>
</feature>
<feature type="strand" evidence="4">
    <location>
        <begin position="20"/>
        <end position="29"/>
    </location>
</feature>
<feature type="helix" evidence="4">
    <location>
        <begin position="31"/>
        <end position="41"/>
    </location>
</feature>
<feature type="helix" evidence="4">
    <location>
        <begin position="46"/>
        <end position="53"/>
    </location>
</feature>
<feature type="helix" evidence="4">
    <location>
        <begin position="61"/>
        <end position="78"/>
    </location>
</feature>
<feature type="helix" evidence="4">
    <location>
        <begin position="83"/>
        <end position="85"/>
    </location>
</feature>
<feature type="strand" evidence="4">
    <location>
        <begin position="86"/>
        <end position="95"/>
    </location>
</feature>
<feature type="strand" evidence="4">
    <location>
        <begin position="99"/>
        <end position="104"/>
    </location>
</feature>
<feature type="helix" evidence="4">
    <location>
        <begin position="106"/>
        <end position="108"/>
    </location>
</feature>
<feature type="strand" evidence="4">
    <location>
        <begin position="110"/>
        <end position="115"/>
    </location>
</feature>
<feature type="strand" evidence="4">
    <location>
        <begin position="118"/>
        <end position="126"/>
    </location>
</feature>
<feature type="helix" evidence="4">
    <location>
        <begin position="127"/>
        <end position="131"/>
    </location>
</feature>